<keyword id="KW-0963">Cytoplasm</keyword>
<keyword id="KW-0238">DNA-binding</keyword>
<feature type="chain" id="PRO_0000170405" description="Nucleoid-associated protein lin2851">
    <location>
        <begin position="1"/>
        <end position="105"/>
    </location>
</feature>
<feature type="region of interest" description="Disordered" evidence="2">
    <location>
        <begin position="1"/>
        <end position="23"/>
    </location>
</feature>
<feature type="compositionally biased region" description="Low complexity" evidence="2">
    <location>
        <begin position="1"/>
        <end position="16"/>
    </location>
</feature>
<evidence type="ECO:0000255" key="1">
    <source>
        <dbReference type="HAMAP-Rule" id="MF_00274"/>
    </source>
</evidence>
<evidence type="ECO:0000256" key="2">
    <source>
        <dbReference type="SAM" id="MobiDB-lite"/>
    </source>
</evidence>
<gene>
    <name type="ordered locus">lin2851</name>
</gene>
<reference key="1">
    <citation type="journal article" date="2001" name="Science">
        <title>Comparative genomics of Listeria species.</title>
        <authorList>
            <person name="Glaser P."/>
            <person name="Frangeul L."/>
            <person name="Buchrieser C."/>
            <person name="Rusniok C."/>
            <person name="Amend A."/>
            <person name="Baquero F."/>
            <person name="Berche P."/>
            <person name="Bloecker H."/>
            <person name="Brandt P."/>
            <person name="Chakraborty T."/>
            <person name="Charbit A."/>
            <person name="Chetouani F."/>
            <person name="Couve E."/>
            <person name="de Daruvar A."/>
            <person name="Dehoux P."/>
            <person name="Domann E."/>
            <person name="Dominguez-Bernal G."/>
            <person name="Duchaud E."/>
            <person name="Durant L."/>
            <person name="Dussurget O."/>
            <person name="Entian K.-D."/>
            <person name="Fsihi H."/>
            <person name="Garcia-del Portillo F."/>
            <person name="Garrido P."/>
            <person name="Gautier L."/>
            <person name="Goebel W."/>
            <person name="Gomez-Lopez N."/>
            <person name="Hain T."/>
            <person name="Hauf J."/>
            <person name="Jackson D."/>
            <person name="Jones L.-M."/>
            <person name="Kaerst U."/>
            <person name="Kreft J."/>
            <person name="Kuhn M."/>
            <person name="Kunst F."/>
            <person name="Kurapkat G."/>
            <person name="Madueno E."/>
            <person name="Maitournam A."/>
            <person name="Mata Vicente J."/>
            <person name="Ng E."/>
            <person name="Nedjari H."/>
            <person name="Nordsiek G."/>
            <person name="Novella S."/>
            <person name="de Pablos B."/>
            <person name="Perez-Diaz J.-C."/>
            <person name="Purcell R."/>
            <person name="Remmel B."/>
            <person name="Rose M."/>
            <person name="Schlueter T."/>
            <person name="Simoes N."/>
            <person name="Tierrez A."/>
            <person name="Vazquez-Boland J.-A."/>
            <person name="Voss H."/>
            <person name="Wehland J."/>
            <person name="Cossart P."/>
        </authorList>
    </citation>
    <scope>NUCLEOTIDE SEQUENCE [LARGE SCALE GENOMIC DNA]</scope>
    <source>
        <strain>ATCC BAA-680 / CLIP 11262</strain>
    </source>
</reference>
<protein>
    <recommendedName>
        <fullName evidence="1">Nucleoid-associated protein lin2851</fullName>
    </recommendedName>
</protein>
<accession>Q927D8</accession>
<comment type="function">
    <text evidence="1">Binds to DNA and alters its conformation. May be involved in regulation of gene expression, nucleoid organization and DNA protection.</text>
</comment>
<comment type="subunit">
    <text evidence="1">Homodimer.</text>
</comment>
<comment type="subcellular location">
    <subcellularLocation>
        <location evidence="1">Cytoplasm</location>
        <location evidence="1">Nucleoid</location>
    </subcellularLocation>
</comment>
<comment type="similarity">
    <text evidence="1">Belongs to the YbaB/EbfC family.</text>
</comment>
<dbReference type="EMBL" id="AL596173">
    <property type="protein sequence ID" value="CAC98077.1"/>
    <property type="molecule type" value="Genomic_DNA"/>
</dbReference>
<dbReference type="PIR" id="AE1788">
    <property type="entry name" value="AE1788"/>
</dbReference>
<dbReference type="RefSeq" id="WP_010991407.1">
    <property type="nucleotide sequence ID" value="NC_003212.1"/>
</dbReference>
<dbReference type="SMR" id="Q927D8"/>
<dbReference type="STRING" id="272626.gene:17567238"/>
<dbReference type="KEGG" id="lin:lin2851"/>
<dbReference type="eggNOG" id="COG0718">
    <property type="taxonomic scope" value="Bacteria"/>
</dbReference>
<dbReference type="HOGENOM" id="CLU_140930_1_0_9"/>
<dbReference type="OrthoDB" id="9795263at2"/>
<dbReference type="Proteomes" id="UP000002513">
    <property type="component" value="Chromosome"/>
</dbReference>
<dbReference type="GO" id="GO:0043590">
    <property type="term" value="C:bacterial nucleoid"/>
    <property type="evidence" value="ECO:0007669"/>
    <property type="project" value="UniProtKB-UniRule"/>
</dbReference>
<dbReference type="GO" id="GO:0005829">
    <property type="term" value="C:cytosol"/>
    <property type="evidence" value="ECO:0007669"/>
    <property type="project" value="TreeGrafter"/>
</dbReference>
<dbReference type="GO" id="GO:0003677">
    <property type="term" value="F:DNA binding"/>
    <property type="evidence" value="ECO:0007669"/>
    <property type="project" value="UniProtKB-UniRule"/>
</dbReference>
<dbReference type="FunFam" id="3.30.1310.10:FF:000002">
    <property type="entry name" value="Nucleoid-associated protein IKC_06587"/>
    <property type="match status" value="1"/>
</dbReference>
<dbReference type="Gene3D" id="3.30.1310.10">
    <property type="entry name" value="Nucleoid-associated protein YbaB-like domain"/>
    <property type="match status" value="1"/>
</dbReference>
<dbReference type="HAMAP" id="MF_00274">
    <property type="entry name" value="DNA_YbaB_EbfC"/>
    <property type="match status" value="1"/>
</dbReference>
<dbReference type="InterPro" id="IPR036894">
    <property type="entry name" value="YbaB-like_sf"/>
</dbReference>
<dbReference type="InterPro" id="IPR004401">
    <property type="entry name" value="YbaB/EbfC"/>
</dbReference>
<dbReference type="NCBIfam" id="TIGR00103">
    <property type="entry name" value="DNA_YbaB_EbfC"/>
    <property type="match status" value="1"/>
</dbReference>
<dbReference type="PANTHER" id="PTHR33449">
    <property type="entry name" value="NUCLEOID-ASSOCIATED PROTEIN YBAB"/>
    <property type="match status" value="1"/>
</dbReference>
<dbReference type="PANTHER" id="PTHR33449:SF1">
    <property type="entry name" value="NUCLEOID-ASSOCIATED PROTEIN YBAB"/>
    <property type="match status" value="1"/>
</dbReference>
<dbReference type="Pfam" id="PF02575">
    <property type="entry name" value="YbaB_DNA_bd"/>
    <property type="match status" value="1"/>
</dbReference>
<dbReference type="PIRSF" id="PIRSF004555">
    <property type="entry name" value="UCP004555"/>
    <property type="match status" value="1"/>
</dbReference>
<dbReference type="SUPFAM" id="SSF82607">
    <property type="entry name" value="YbaB-like"/>
    <property type="match status" value="1"/>
</dbReference>
<sequence>MRGMGNMQGMMKQMQKMQKEMAKAQADLEAQEFTGTAGGGMVTVKAIGKRVITDVVINEEVVDPEDIEMLQDLVLAATNDVLKQIEDTTSQTMGKFTQGLNLPGM</sequence>
<name>Y2851_LISIN</name>
<organism>
    <name type="scientific">Listeria innocua serovar 6a (strain ATCC BAA-680 / CLIP 11262)</name>
    <dbReference type="NCBI Taxonomy" id="272626"/>
    <lineage>
        <taxon>Bacteria</taxon>
        <taxon>Bacillati</taxon>
        <taxon>Bacillota</taxon>
        <taxon>Bacilli</taxon>
        <taxon>Bacillales</taxon>
        <taxon>Listeriaceae</taxon>
        <taxon>Listeria</taxon>
    </lineage>
</organism>
<proteinExistence type="inferred from homology"/>